<accession>A6WS29</accession>
<protein>
    <recommendedName>
        <fullName evidence="1">Lysine--tRNA ligase</fullName>
        <ecNumber evidence="1">6.1.1.6</ecNumber>
    </recommendedName>
    <alternativeName>
        <fullName evidence="1">Lysyl-tRNA synthetase</fullName>
        <shortName evidence="1">LysRS</shortName>
    </alternativeName>
</protein>
<evidence type="ECO:0000255" key="1">
    <source>
        <dbReference type="HAMAP-Rule" id="MF_00252"/>
    </source>
</evidence>
<organism>
    <name type="scientific">Shewanella baltica (strain OS185)</name>
    <dbReference type="NCBI Taxonomy" id="402882"/>
    <lineage>
        <taxon>Bacteria</taxon>
        <taxon>Pseudomonadati</taxon>
        <taxon>Pseudomonadota</taxon>
        <taxon>Gammaproteobacteria</taxon>
        <taxon>Alteromonadales</taxon>
        <taxon>Shewanellaceae</taxon>
        <taxon>Shewanella</taxon>
    </lineage>
</organism>
<sequence>MTEQVIDENKLIAERRAKLESIRPNCSANAHPNTFRRTHKAAELQAQYGQNTKEELEALGFKTSIAGRIMAKRGPFLVIQDVSGRIQAYAEKSVQADLKERFQGLDIGDIIGVTGQLHLSGKGDLYVNMEQYELLTKALRPLPADYYGLADQEMRYRQRYVDLIVNEDSRNAFIMRSKVVSAIRNFMIKKEFMEVETPMMHVIPGGASARPFITHHNALDMPMYLRIAPELYLKRLVVGGFERVFEINRNFRNEGLSPRHNPEFTMMEFYMAYADYKDLMDLTEEMLSSIAIELLGSAQMPYGEHTVDFGGPYARLSMLEAIQKYNPDNATIQAMTYEQVKDVEFMRDLAKSLGMKIEKFWTCGQLLEEIFGETAEWQLMQPTFITGYPADISPLARRNDDNHFITDRFEFFIGGREVANGFSELNDAEDQDNRFKAQVDAKDAGDDEAMFYDADYITALEHGLPPTAGQGIGIDRLVMLFTNTHTIRDVILFPAMRPQA</sequence>
<proteinExistence type="inferred from homology"/>
<keyword id="KW-0030">Aminoacyl-tRNA synthetase</keyword>
<keyword id="KW-0067">ATP-binding</keyword>
<keyword id="KW-0963">Cytoplasm</keyword>
<keyword id="KW-0436">Ligase</keyword>
<keyword id="KW-0460">Magnesium</keyword>
<keyword id="KW-0479">Metal-binding</keyword>
<keyword id="KW-0547">Nucleotide-binding</keyword>
<keyword id="KW-0648">Protein biosynthesis</keyword>
<name>SYK_SHEB8</name>
<gene>
    <name evidence="1" type="primary">lysS</name>
    <name type="ordered locus">Shew185_3491</name>
</gene>
<reference key="1">
    <citation type="submission" date="2007-07" db="EMBL/GenBank/DDBJ databases">
        <title>Complete sequence of chromosome of Shewanella baltica OS185.</title>
        <authorList>
            <consortium name="US DOE Joint Genome Institute"/>
            <person name="Copeland A."/>
            <person name="Lucas S."/>
            <person name="Lapidus A."/>
            <person name="Barry K."/>
            <person name="Glavina del Rio T."/>
            <person name="Dalin E."/>
            <person name="Tice H."/>
            <person name="Pitluck S."/>
            <person name="Sims D."/>
            <person name="Brettin T."/>
            <person name="Bruce D."/>
            <person name="Detter J.C."/>
            <person name="Han C."/>
            <person name="Schmutz J."/>
            <person name="Larimer F."/>
            <person name="Land M."/>
            <person name="Hauser L."/>
            <person name="Kyrpides N."/>
            <person name="Mikhailova N."/>
            <person name="Brettar I."/>
            <person name="Rodrigues J."/>
            <person name="Konstantinidis K."/>
            <person name="Tiedje J."/>
            <person name="Richardson P."/>
        </authorList>
    </citation>
    <scope>NUCLEOTIDE SEQUENCE [LARGE SCALE GENOMIC DNA]</scope>
    <source>
        <strain>OS185</strain>
    </source>
</reference>
<feature type="chain" id="PRO_1000012926" description="Lysine--tRNA ligase">
    <location>
        <begin position="1"/>
        <end position="500"/>
    </location>
</feature>
<feature type="binding site" evidence="1">
    <location>
        <position position="410"/>
    </location>
    <ligand>
        <name>Mg(2+)</name>
        <dbReference type="ChEBI" id="CHEBI:18420"/>
        <label>1</label>
    </ligand>
</feature>
<feature type="binding site" evidence="1">
    <location>
        <position position="417"/>
    </location>
    <ligand>
        <name>Mg(2+)</name>
        <dbReference type="ChEBI" id="CHEBI:18420"/>
        <label>1</label>
    </ligand>
</feature>
<feature type="binding site" evidence="1">
    <location>
        <position position="417"/>
    </location>
    <ligand>
        <name>Mg(2+)</name>
        <dbReference type="ChEBI" id="CHEBI:18420"/>
        <label>2</label>
    </ligand>
</feature>
<comment type="catalytic activity">
    <reaction evidence="1">
        <text>tRNA(Lys) + L-lysine + ATP = L-lysyl-tRNA(Lys) + AMP + diphosphate</text>
        <dbReference type="Rhea" id="RHEA:20792"/>
        <dbReference type="Rhea" id="RHEA-COMP:9696"/>
        <dbReference type="Rhea" id="RHEA-COMP:9697"/>
        <dbReference type="ChEBI" id="CHEBI:30616"/>
        <dbReference type="ChEBI" id="CHEBI:32551"/>
        <dbReference type="ChEBI" id="CHEBI:33019"/>
        <dbReference type="ChEBI" id="CHEBI:78442"/>
        <dbReference type="ChEBI" id="CHEBI:78529"/>
        <dbReference type="ChEBI" id="CHEBI:456215"/>
        <dbReference type="EC" id="6.1.1.6"/>
    </reaction>
</comment>
<comment type="cofactor">
    <cofactor evidence="1">
        <name>Mg(2+)</name>
        <dbReference type="ChEBI" id="CHEBI:18420"/>
    </cofactor>
    <text evidence="1">Binds 3 Mg(2+) ions per subunit.</text>
</comment>
<comment type="subunit">
    <text evidence="1">Homodimer.</text>
</comment>
<comment type="subcellular location">
    <subcellularLocation>
        <location evidence="1">Cytoplasm</location>
    </subcellularLocation>
</comment>
<comment type="similarity">
    <text evidence="1">Belongs to the class-II aminoacyl-tRNA synthetase family.</text>
</comment>
<dbReference type="EC" id="6.1.1.6" evidence="1"/>
<dbReference type="EMBL" id="CP000753">
    <property type="protein sequence ID" value="ABS09618.1"/>
    <property type="molecule type" value="Genomic_DNA"/>
</dbReference>
<dbReference type="RefSeq" id="WP_006080389.1">
    <property type="nucleotide sequence ID" value="NC_009665.1"/>
</dbReference>
<dbReference type="SMR" id="A6WS29"/>
<dbReference type="GeneID" id="11774955"/>
<dbReference type="KEGG" id="sbm:Shew185_3491"/>
<dbReference type="HOGENOM" id="CLU_008255_6_0_6"/>
<dbReference type="GO" id="GO:0005829">
    <property type="term" value="C:cytosol"/>
    <property type="evidence" value="ECO:0007669"/>
    <property type="project" value="TreeGrafter"/>
</dbReference>
<dbReference type="GO" id="GO:0005524">
    <property type="term" value="F:ATP binding"/>
    <property type="evidence" value="ECO:0007669"/>
    <property type="project" value="UniProtKB-UniRule"/>
</dbReference>
<dbReference type="GO" id="GO:0004824">
    <property type="term" value="F:lysine-tRNA ligase activity"/>
    <property type="evidence" value="ECO:0007669"/>
    <property type="project" value="UniProtKB-UniRule"/>
</dbReference>
<dbReference type="GO" id="GO:0000287">
    <property type="term" value="F:magnesium ion binding"/>
    <property type="evidence" value="ECO:0007669"/>
    <property type="project" value="UniProtKB-UniRule"/>
</dbReference>
<dbReference type="GO" id="GO:0000049">
    <property type="term" value="F:tRNA binding"/>
    <property type="evidence" value="ECO:0007669"/>
    <property type="project" value="TreeGrafter"/>
</dbReference>
<dbReference type="GO" id="GO:0006430">
    <property type="term" value="P:lysyl-tRNA aminoacylation"/>
    <property type="evidence" value="ECO:0007669"/>
    <property type="project" value="UniProtKB-UniRule"/>
</dbReference>
<dbReference type="CDD" id="cd00775">
    <property type="entry name" value="LysRS_core"/>
    <property type="match status" value="1"/>
</dbReference>
<dbReference type="CDD" id="cd04322">
    <property type="entry name" value="LysRS_N"/>
    <property type="match status" value="1"/>
</dbReference>
<dbReference type="FunFam" id="2.40.50.140:FF:000024">
    <property type="entry name" value="Lysine--tRNA ligase"/>
    <property type="match status" value="1"/>
</dbReference>
<dbReference type="FunFam" id="3.30.930.10:FF:000001">
    <property type="entry name" value="Lysine--tRNA ligase"/>
    <property type="match status" value="1"/>
</dbReference>
<dbReference type="Gene3D" id="3.30.930.10">
    <property type="entry name" value="Bira Bifunctional Protein, Domain 2"/>
    <property type="match status" value="1"/>
</dbReference>
<dbReference type="Gene3D" id="2.40.50.140">
    <property type="entry name" value="Nucleic acid-binding proteins"/>
    <property type="match status" value="1"/>
</dbReference>
<dbReference type="HAMAP" id="MF_00252">
    <property type="entry name" value="Lys_tRNA_synth_class2"/>
    <property type="match status" value="1"/>
</dbReference>
<dbReference type="InterPro" id="IPR004364">
    <property type="entry name" value="Aa-tRNA-synt_II"/>
</dbReference>
<dbReference type="InterPro" id="IPR006195">
    <property type="entry name" value="aa-tRNA-synth_II"/>
</dbReference>
<dbReference type="InterPro" id="IPR045864">
    <property type="entry name" value="aa-tRNA-synth_II/BPL/LPL"/>
</dbReference>
<dbReference type="InterPro" id="IPR002313">
    <property type="entry name" value="Lys-tRNA-ligase_II"/>
</dbReference>
<dbReference type="InterPro" id="IPR044136">
    <property type="entry name" value="Lys-tRNA-ligase_II_N"/>
</dbReference>
<dbReference type="InterPro" id="IPR018149">
    <property type="entry name" value="Lys-tRNA-synth_II_C"/>
</dbReference>
<dbReference type="InterPro" id="IPR012340">
    <property type="entry name" value="NA-bd_OB-fold"/>
</dbReference>
<dbReference type="InterPro" id="IPR004365">
    <property type="entry name" value="NA-bd_OB_tRNA"/>
</dbReference>
<dbReference type="NCBIfam" id="TIGR00499">
    <property type="entry name" value="lysS_bact"/>
    <property type="match status" value="1"/>
</dbReference>
<dbReference type="NCBIfam" id="NF001756">
    <property type="entry name" value="PRK00484.1"/>
    <property type="match status" value="1"/>
</dbReference>
<dbReference type="PANTHER" id="PTHR42918:SF15">
    <property type="entry name" value="LYSINE--TRNA LIGASE, CHLOROPLASTIC_MITOCHONDRIAL"/>
    <property type="match status" value="1"/>
</dbReference>
<dbReference type="PANTHER" id="PTHR42918">
    <property type="entry name" value="LYSYL-TRNA SYNTHETASE"/>
    <property type="match status" value="1"/>
</dbReference>
<dbReference type="Pfam" id="PF00152">
    <property type="entry name" value="tRNA-synt_2"/>
    <property type="match status" value="1"/>
</dbReference>
<dbReference type="Pfam" id="PF01336">
    <property type="entry name" value="tRNA_anti-codon"/>
    <property type="match status" value="1"/>
</dbReference>
<dbReference type="PRINTS" id="PR00982">
    <property type="entry name" value="TRNASYNTHLYS"/>
</dbReference>
<dbReference type="SUPFAM" id="SSF55681">
    <property type="entry name" value="Class II aaRS and biotin synthetases"/>
    <property type="match status" value="1"/>
</dbReference>
<dbReference type="SUPFAM" id="SSF50249">
    <property type="entry name" value="Nucleic acid-binding proteins"/>
    <property type="match status" value="1"/>
</dbReference>
<dbReference type="PROSITE" id="PS50862">
    <property type="entry name" value="AA_TRNA_LIGASE_II"/>
    <property type="match status" value="1"/>
</dbReference>